<dbReference type="EMBL" id="BA000017">
    <property type="protein sequence ID" value="BAB58408.1"/>
    <property type="molecule type" value="Genomic_DNA"/>
</dbReference>
<dbReference type="RefSeq" id="WP_000124353.1">
    <property type="nucleotide sequence ID" value="NC_002758.2"/>
</dbReference>
<dbReference type="SMR" id="P66493"/>
<dbReference type="GeneID" id="98346558"/>
<dbReference type="KEGG" id="sav:SAV2246"/>
<dbReference type="HOGENOM" id="CLU_144911_0_1_9"/>
<dbReference type="PhylomeDB" id="P66493"/>
<dbReference type="Proteomes" id="UP000002481">
    <property type="component" value="Chromosome"/>
</dbReference>
<dbReference type="GO" id="GO:0005737">
    <property type="term" value="C:cytoplasm"/>
    <property type="evidence" value="ECO:0007669"/>
    <property type="project" value="UniProtKB-ARBA"/>
</dbReference>
<dbReference type="GO" id="GO:0015935">
    <property type="term" value="C:small ribosomal subunit"/>
    <property type="evidence" value="ECO:0007669"/>
    <property type="project" value="InterPro"/>
</dbReference>
<dbReference type="GO" id="GO:0019843">
    <property type="term" value="F:rRNA binding"/>
    <property type="evidence" value="ECO:0007669"/>
    <property type="project" value="UniProtKB-UniRule"/>
</dbReference>
<dbReference type="GO" id="GO:0003735">
    <property type="term" value="F:structural constituent of ribosome"/>
    <property type="evidence" value="ECO:0007669"/>
    <property type="project" value="InterPro"/>
</dbReference>
<dbReference type="GO" id="GO:0000028">
    <property type="term" value="P:ribosomal small subunit assembly"/>
    <property type="evidence" value="ECO:0007669"/>
    <property type="project" value="TreeGrafter"/>
</dbReference>
<dbReference type="GO" id="GO:0006412">
    <property type="term" value="P:translation"/>
    <property type="evidence" value="ECO:0007669"/>
    <property type="project" value="UniProtKB-UniRule"/>
</dbReference>
<dbReference type="FunFam" id="3.30.860.10:FF:000001">
    <property type="entry name" value="30S ribosomal protein S19"/>
    <property type="match status" value="1"/>
</dbReference>
<dbReference type="Gene3D" id="3.30.860.10">
    <property type="entry name" value="30s Ribosomal Protein S19, Chain A"/>
    <property type="match status" value="1"/>
</dbReference>
<dbReference type="HAMAP" id="MF_00531">
    <property type="entry name" value="Ribosomal_uS19"/>
    <property type="match status" value="1"/>
</dbReference>
<dbReference type="InterPro" id="IPR002222">
    <property type="entry name" value="Ribosomal_uS19"/>
</dbReference>
<dbReference type="InterPro" id="IPR005732">
    <property type="entry name" value="Ribosomal_uS19_bac-type"/>
</dbReference>
<dbReference type="InterPro" id="IPR020934">
    <property type="entry name" value="Ribosomal_uS19_CS"/>
</dbReference>
<dbReference type="InterPro" id="IPR023575">
    <property type="entry name" value="Ribosomal_uS19_SF"/>
</dbReference>
<dbReference type="NCBIfam" id="TIGR01050">
    <property type="entry name" value="rpsS_bact"/>
    <property type="match status" value="1"/>
</dbReference>
<dbReference type="PANTHER" id="PTHR11880">
    <property type="entry name" value="RIBOSOMAL PROTEIN S19P FAMILY MEMBER"/>
    <property type="match status" value="1"/>
</dbReference>
<dbReference type="PANTHER" id="PTHR11880:SF8">
    <property type="entry name" value="SMALL RIBOSOMAL SUBUNIT PROTEIN US19M"/>
    <property type="match status" value="1"/>
</dbReference>
<dbReference type="Pfam" id="PF00203">
    <property type="entry name" value="Ribosomal_S19"/>
    <property type="match status" value="1"/>
</dbReference>
<dbReference type="PIRSF" id="PIRSF002144">
    <property type="entry name" value="Ribosomal_S19"/>
    <property type="match status" value="1"/>
</dbReference>
<dbReference type="PRINTS" id="PR00975">
    <property type="entry name" value="RIBOSOMALS19"/>
</dbReference>
<dbReference type="SUPFAM" id="SSF54570">
    <property type="entry name" value="Ribosomal protein S19"/>
    <property type="match status" value="1"/>
</dbReference>
<dbReference type="PROSITE" id="PS00323">
    <property type="entry name" value="RIBOSOMAL_S19"/>
    <property type="match status" value="1"/>
</dbReference>
<protein>
    <recommendedName>
        <fullName evidence="1">Small ribosomal subunit protein uS19</fullName>
    </recommendedName>
    <alternativeName>
        <fullName evidence="2">30S ribosomal protein S19</fullName>
    </alternativeName>
</protein>
<reference key="1">
    <citation type="journal article" date="2001" name="Lancet">
        <title>Whole genome sequencing of meticillin-resistant Staphylococcus aureus.</title>
        <authorList>
            <person name="Kuroda M."/>
            <person name="Ohta T."/>
            <person name="Uchiyama I."/>
            <person name="Baba T."/>
            <person name="Yuzawa H."/>
            <person name="Kobayashi I."/>
            <person name="Cui L."/>
            <person name="Oguchi A."/>
            <person name="Aoki K."/>
            <person name="Nagai Y."/>
            <person name="Lian J.-Q."/>
            <person name="Ito T."/>
            <person name="Kanamori M."/>
            <person name="Matsumaru H."/>
            <person name="Maruyama A."/>
            <person name="Murakami H."/>
            <person name="Hosoyama A."/>
            <person name="Mizutani-Ui Y."/>
            <person name="Takahashi N.K."/>
            <person name="Sawano T."/>
            <person name="Inoue R."/>
            <person name="Kaito C."/>
            <person name="Sekimizu K."/>
            <person name="Hirakawa H."/>
            <person name="Kuhara S."/>
            <person name="Goto S."/>
            <person name="Yabuzaki J."/>
            <person name="Kanehisa M."/>
            <person name="Yamashita A."/>
            <person name="Oshima K."/>
            <person name="Furuya K."/>
            <person name="Yoshino C."/>
            <person name="Shiba T."/>
            <person name="Hattori M."/>
            <person name="Ogasawara N."/>
            <person name="Hayashi H."/>
            <person name="Hiramatsu K."/>
        </authorList>
    </citation>
    <scope>NUCLEOTIDE SEQUENCE [LARGE SCALE GENOMIC DNA]</scope>
    <source>
        <strain>Mu50 / ATCC 700699</strain>
    </source>
</reference>
<proteinExistence type="inferred from homology"/>
<evidence type="ECO:0000255" key="1">
    <source>
        <dbReference type="HAMAP-Rule" id="MF_00531"/>
    </source>
</evidence>
<evidence type="ECO:0000305" key="2"/>
<name>RS19_STAAM</name>
<organism>
    <name type="scientific">Staphylococcus aureus (strain Mu50 / ATCC 700699)</name>
    <dbReference type="NCBI Taxonomy" id="158878"/>
    <lineage>
        <taxon>Bacteria</taxon>
        <taxon>Bacillati</taxon>
        <taxon>Bacillota</taxon>
        <taxon>Bacilli</taxon>
        <taxon>Bacillales</taxon>
        <taxon>Staphylococcaceae</taxon>
        <taxon>Staphylococcus</taxon>
    </lineage>
</organism>
<gene>
    <name evidence="1" type="primary">rpsS</name>
    <name type="ordered locus">SAV2246</name>
</gene>
<accession>P66493</accession>
<accession>Q99S25</accession>
<sequence length="92" mass="10615">MARSIKKGPFVDEHLMKKVEAQEGSEKKQVIKTWSRRSTIFPNFIGHTFAVYDGRKHVPVYVTEDMVGHKLGEFAPTRTFKGHVADDKKTRR</sequence>
<comment type="function">
    <text evidence="1">Protein S19 forms a complex with S13 that binds strongly to the 16S ribosomal RNA.</text>
</comment>
<comment type="similarity">
    <text evidence="1">Belongs to the universal ribosomal protein uS19 family.</text>
</comment>
<keyword id="KW-0687">Ribonucleoprotein</keyword>
<keyword id="KW-0689">Ribosomal protein</keyword>
<keyword id="KW-0694">RNA-binding</keyword>
<keyword id="KW-0699">rRNA-binding</keyword>
<feature type="chain" id="PRO_0000129900" description="Small ribosomal subunit protein uS19">
    <location>
        <begin position="1"/>
        <end position="92"/>
    </location>
</feature>